<feature type="chain" id="PRO_0000294769" description="Small ribosomal subunit protein uS11">
    <location>
        <begin position="1"/>
        <end position="131"/>
    </location>
</feature>
<protein>
    <recommendedName>
        <fullName evidence="1">Small ribosomal subunit protein uS11</fullName>
    </recommendedName>
    <alternativeName>
        <fullName evidence="2">30S ribosomal protein S11</fullName>
    </alternativeName>
</protein>
<dbReference type="EMBL" id="AM260522">
    <property type="protein sequence ID" value="CAJ99010.1"/>
    <property type="molecule type" value="Genomic_DNA"/>
</dbReference>
<dbReference type="RefSeq" id="WP_011577127.1">
    <property type="nucleotide sequence ID" value="NC_008229.1"/>
</dbReference>
<dbReference type="SMR" id="Q17ZB6"/>
<dbReference type="STRING" id="382638.Hac_0158"/>
<dbReference type="GeneID" id="31757689"/>
<dbReference type="KEGG" id="hac:Hac_0158"/>
<dbReference type="eggNOG" id="COG0100">
    <property type="taxonomic scope" value="Bacteria"/>
</dbReference>
<dbReference type="HOGENOM" id="CLU_072439_5_0_7"/>
<dbReference type="OrthoDB" id="9806415at2"/>
<dbReference type="BioCyc" id="HACI382638:HAC_RS00700-MONOMER"/>
<dbReference type="Proteomes" id="UP000000775">
    <property type="component" value="Chromosome"/>
</dbReference>
<dbReference type="GO" id="GO:1990904">
    <property type="term" value="C:ribonucleoprotein complex"/>
    <property type="evidence" value="ECO:0007669"/>
    <property type="project" value="UniProtKB-KW"/>
</dbReference>
<dbReference type="GO" id="GO:0005840">
    <property type="term" value="C:ribosome"/>
    <property type="evidence" value="ECO:0007669"/>
    <property type="project" value="UniProtKB-KW"/>
</dbReference>
<dbReference type="GO" id="GO:0019843">
    <property type="term" value="F:rRNA binding"/>
    <property type="evidence" value="ECO:0007669"/>
    <property type="project" value="UniProtKB-UniRule"/>
</dbReference>
<dbReference type="GO" id="GO:0003735">
    <property type="term" value="F:structural constituent of ribosome"/>
    <property type="evidence" value="ECO:0007669"/>
    <property type="project" value="InterPro"/>
</dbReference>
<dbReference type="GO" id="GO:0006412">
    <property type="term" value="P:translation"/>
    <property type="evidence" value="ECO:0007669"/>
    <property type="project" value="UniProtKB-UniRule"/>
</dbReference>
<dbReference type="FunFam" id="3.30.420.80:FF:000001">
    <property type="entry name" value="30S ribosomal protein S11"/>
    <property type="match status" value="1"/>
</dbReference>
<dbReference type="Gene3D" id="3.30.420.80">
    <property type="entry name" value="Ribosomal protein S11"/>
    <property type="match status" value="1"/>
</dbReference>
<dbReference type="HAMAP" id="MF_01310">
    <property type="entry name" value="Ribosomal_uS11"/>
    <property type="match status" value="1"/>
</dbReference>
<dbReference type="InterPro" id="IPR001971">
    <property type="entry name" value="Ribosomal_uS11"/>
</dbReference>
<dbReference type="InterPro" id="IPR019981">
    <property type="entry name" value="Ribosomal_uS11_bac-type"/>
</dbReference>
<dbReference type="InterPro" id="IPR036967">
    <property type="entry name" value="Ribosomal_uS11_sf"/>
</dbReference>
<dbReference type="NCBIfam" id="NF003698">
    <property type="entry name" value="PRK05309.1"/>
    <property type="match status" value="1"/>
</dbReference>
<dbReference type="NCBIfam" id="TIGR03632">
    <property type="entry name" value="uS11_bact"/>
    <property type="match status" value="1"/>
</dbReference>
<dbReference type="PANTHER" id="PTHR11759">
    <property type="entry name" value="40S RIBOSOMAL PROTEIN S14/30S RIBOSOMAL PROTEIN S11"/>
    <property type="match status" value="1"/>
</dbReference>
<dbReference type="Pfam" id="PF00411">
    <property type="entry name" value="Ribosomal_S11"/>
    <property type="match status" value="1"/>
</dbReference>
<dbReference type="PIRSF" id="PIRSF002131">
    <property type="entry name" value="Ribosomal_S11"/>
    <property type="match status" value="1"/>
</dbReference>
<dbReference type="SUPFAM" id="SSF53137">
    <property type="entry name" value="Translational machinery components"/>
    <property type="match status" value="1"/>
</dbReference>
<organism>
    <name type="scientific">Helicobacter acinonychis (strain Sheeba)</name>
    <dbReference type="NCBI Taxonomy" id="382638"/>
    <lineage>
        <taxon>Bacteria</taxon>
        <taxon>Pseudomonadati</taxon>
        <taxon>Campylobacterota</taxon>
        <taxon>Epsilonproteobacteria</taxon>
        <taxon>Campylobacterales</taxon>
        <taxon>Helicobacteraceae</taxon>
        <taxon>Helicobacter</taxon>
    </lineage>
</organism>
<gene>
    <name evidence="1" type="primary">rpsK</name>
    <name type="ordered locus">Hac_0158</name>
</gene>
<proteinExistence type="inferred from homology"/>
<sequence>MAKRNVATKKKVVKKNIARGVVYISATFNNTNITITDEMGNVICWSTAGGLGFKGSKKSTPYAAQQAVESALSKAKEHGVKEVGIKVQGSGSGRETAIKSVGATEGVKVLWIKDITPLSHNGCRPPKRRRV</sequence>
<reference key="1">
    <citation type="journal article" date="2006" name="PLoS Genet.">
        <title>Who ate whom? Adaptive Helicobacter genomic changes that accompanied a host jump from early humans to large felines.</title>
        <authorList>
            <person name="Eppinger M."/>
            <person name="Baar C."/>
            <person name="Linz B."/>
            <person name="Raddatz G."/>
            <person name="Lanz C."/>
            <person name="Keller H."/>
            <person name="Morelli G."/>
            <person name="Gressmann H."/>
            <person name="Achtman M."/>
            <person name="Schuster S.C."/>
        </authorList>
    </citation>
    <scope>NUCLEOTIDE SEQUENCE [LARGE SCALE GENOMIC DNA]</scope>
    <source>
        <strain>Sheeba</strain>
    </source>
</reference>
<name>RS11_HELAH</name>
<accession>Q17ZB6</accession>
<keyword id="KW-0687">Ribonucleoprotein</keyword>
<keyword id="KW-0689">Ribosomal protein</keyword>
<keyword id="KW-0694">RNA-binding</keyword>
<keyword id="KW-0699">rRNA-binding</keyword>
<comment type="function">
    <text evidence="1">Located on the platform of the 30S subunit, it bridges several disparate RNA helices of the 16S rRNA. Forms part of the Shine-Dalgarno cleft in the 70S ribosome.</text>
</comment>
<comment type="subunit">
    <text evidence="1">Part of the 30S ribosomal subunit. Interacts with proteins S7 and S18. Binds to IF-3.</text>
</comment>
<comment type="similarity">
    <text evidence="1">Belongs to the universal ribosomal protein uS11 family.</text>
</comment>
<evidence type="ECO:0000255" key="1">
    <source>
        <dbReference type="HAMAP-Rule" id="MF_01310"/>
    </source>
</evidence>
<evidence type="ECO:0000305" key="2"/>